<keyword id="KW-0539">Nucleus</keyword>
<keyword id="KW-1185">Reference proteome</keyword>
<keyword id="KW-0677">Repeat</keyword>
<keyword id="KW-0698">rRNA processing</keyword>
<keyword id="KW-0853">WD repeat</keyword>
<sequence length="519" mass="58445">MEKDTEELELENAVFGNINNFSSFLDKENETFDVMMNEAPELSEDNDAQEDELEKLEDAELFMFDTGSADGAKDSVPLDIIAGDNTVKEDEEASNEIPSIWEDSDDERLMISLQDHSRLRKLRQYEDEDMVNGLQYARRLRTQFERVYPVPEWAKKQDVTEEEDEFNALSEKSVIPKSLKSLFKSSVSYINQSSKLLAPGTINIKRLKDANFQAPSHSGIRCMSIHPYFPLLLTCGFDRTLRIYQLDGKVNPLVTSLHLRSSALQTALFHPDGKRVIAAGRRKYMYIWDLESAQVQKVSRMYGQENFQPSMERFHVDPTGKYIALEGRSGHINLLHALTGQFATSFKIEGVLSDVLFTSDGSEMLVLSYGAEVWHFNVEQRSVVRRWQVQDGVSTTHFCLDPSNKYLAIGSKSGIVNIYDLQTSNADAAPKPVTTLDNITFSINSMSFSQDSQVLAIASRGKKDTLRLVHVPSFSVFRNWPTSATPLGRVTCLAFGKGGELCVGNEAGRVGLWKLAHYD</sequence>
<feature type="chain" id="PRO_0000051329" description="Probable U3 small nucleolar RNA-associated protein 18">
    <location>
        <begin position="1"/>
        <end position="519"/>
    </location>
</feature>
<feature type="repeat" description="WD 1">
    <location>
        <begin position="26"/>
        <end position="66"/>
    </location>
</feature>
<feature type="repeat" description="WD 2">
    <location>
        <begin position="71"/>
        <end position="111"/>
    </location>
</feature>
<feature type="repeat" description="WD 3">
    <location>
        <begin position="216"/>
        <end position="254"/>
    </location>
</feature>
<feature type="repeat" description="WD 4">
    <location>
        <begin position="259"/>
        <end position="298"/>
    </location>
</feature>
<feature type="repeat" description="WD 5">
    <location>
        <begin position="306"/>
        <end position="345"/>
    </location>
</feature>
<feature type="repeat" description="WD 6">
    <location>
        <begin position="347"/>
        <end position="386"/>
    </location>
</feature>
<feature type="repeat" description="WD 7">
    <location>
        <begin position="390"/>
        <end position="429"/>
    </location>
</feature>
<feature type="repeat" description="WD 8">
    <location>
        <begin position="438"/>
        <end position="479"/>
    </location>
</feature>
<feature type="repeat" description="WD 9">
    <location>
        <begin position="485"/>
        <end position="519"/>
    </location>
</feature>
<name>UTP18_SCHPO</name>
<evidence type="ECO:0000250" key="1"/>
<evidence type="ECO:0000305" key="2"/>
<gene>
    <name type="ORF">SPBC29A3.06</name>
</gene>
<accession>P78750</accession>
<organism>
    <name type="scientific">Schizosaccharomyces pombe (strain 972 / ATCC 24843)</name>
    <name type="common">Fission yeast</name>
    <dbReference type="NCBI Taxonomy" id="284812"/>
    <lineage>
        <taxon>Eukaryota</taxon>
        <taxon>Fungi</taxon>
        <taxon>Dikarya</taxon>
        <taxon>Ascomycota</taxon>
        <taxon>Taphrinomycotina</taxon>
        <taxon>Schizosaccharomycetes</taxon>
        <taxon>Schizosaccharomycetales</taxon>
        <taxon>Schizosaccharomycetaceae</taxon>
        <taxon>Schizosaccharomyces</taxon>
    </lineage>
</organism>
<protein>
    <recommendedName>
        <fullName>Probable U3 small nucleolar RNA-associated protein 18</fullName>
        <shortName>U3 snoRNA-associated protein 18</shortName>
    </recommendedName>
</protein>
<proteinExistence type="evidence at transcript level"/>
<comment type="function">
    <text evidence="1">Involved in nucleolar processing of pre-18S ribosomal RNA.</text>
</comment>
<comment type="subunit">
    <text evidence="1">Component of the ribosomal small subunit (SSU) processome.</text>
</comment>
<comment type="subcellular location">
    <subcellularLocation>
        <location evidence="1">Nucleus</location>
        <location evidence="1">Nucleolus</location>
    </subcellularLocation>
</comment>
<comment type="similarity">
    <text evidence="2">Belongs to the WD repeat UTP18 family.</text>
</comment>
<comment type="sequence caution" evidence="2">
    <conflict type="frameshift">
        <sequence resource="EMBL-CDS" id="CAA18383"/>
    </conflict>
</comment>
<dbReference type="EMBL" id="CU329671">
    <property type="protein sequence ID" value="CAA18383.2"/>
    <property type="status" value="ALT_FRAME"/>
    <property type="molecule type" value="Genomic_DNA"/>
</dbReference>
<dbReference type="EMBL" id="D89098">
    <property type="protein sequence ID" value="BAA13761.1"/>
    <property type="molecule type" value="mRNA"/>
</dbReference>
<dbReference type="PIR" id="T40077">
    <property type="entry name" value="T40077"/>
</dbReference>
<dbReference type="PIR" id="T42005">
    <property type="entry name" value="T42005"/>
</dbReference>
<dbReference type="RefSeq" id="NP_595834.2">
    <property type="nucleotide sequence ID" value="NM_001021738.2"/>
</dbReference>
<dbReference type="SMR" id="P78750"/>
<dbReference type="BioGRID" id="277057">
    <property type="interactions" value="2"/>
</dbReference>
<dbReference type="FunCoup" id="P78750">
    <property type="interactions" value="800"/>
</dbReference>
<dbReference type="STRING" id="284812.P78750"/>
<dbReference type="iPTMnet" id="P78750"/>
<dbReference type="PaxDb" id="4896-SPBC29A3.06.1"/>
<dbReference type="KEGG" id="spo:2540529"/>
<dbReference type="PomBase" id="SPBC29A3.06"/>
<dbReference type="eggNOG" id="KOG2055">
    <property type="taxonomic scope" value="Eukaryota"/>
</dbReference>
<dbReference type="HOGENOM" id="CLU_011055_1_0_1"/>
<dbReference type="InParanoid" id="P78750"/>
<dbReference type="PhylomeDB" id="P78750"/>
<dbReference type="Reactome" id="R-SPO-6791226">
    <property type="pathway name" value="Major pathway of rRNA processing in the nucleolus and cytosol"/>
</dbReference>
<dbReference type="PRO" id="PR:P78750"/>
<dbReference type="Proteomes" id="UP000002485">
    <property type="component" value="Chromosome II"/>
</dbReference>
<dbReference type="GO" id="GO:0034388">
    <property type="term" value="C:Pwp2p-containing subcomplex of 90S preribosome"/>
    <property type="evidence" value="ECO:0000318"/>
    <property type="project" value="GO_Central"/>
</dbReference>
<dbReference type="GO" id="GO:0032040">
    <property type="term" value="C:small-subunit processome"/>
    <property type="evidence" value="ECO:0000314"/>
    <property type="project" value="PomBase"/>
</dbReference>
<dbReference type="GO" id="GO:0006364">
    <property type="term" value="P:rRNA processing"/>
    <property type="evidence" value="ECO:0000266"/>
    <property type="project" value="PomBase"/>
</dbReference>
<dbReference type="Gene3D" id="2.130.10.10">
    <property type="entry name" value="YVTN repeat-like/Quinoprotein amine dehydrogenase"/>
    <property type="match status" value="1"/>
</dbReference>
<dbReference type="InterPro" id="IPR045161">
    <property type="entry name" value="Utp18"/>
</dbReference>
<dbReference type="InterPro" id="IPR015943">
    <property type="entry name" value="WD40/YVTN_repeat-like_dom_sf"/>
</dbReference>
<dbReference type="InterPro" id="IPR036322">
    <property type="entry name" value="WD40_repeat_dom_sf"/>
</dbReference>
<dbReference type="InterPro" id="IPR001680">
    <property type="entry name" value="WD40_rpt"/>
</dbReference>
<dbReference type="PANTHER" id="PTHR18359:SF0">
    <property type="entry name" value="U3 SMALL NUCLEOLAR RNA-ASSOCIATED PROTEIN 18 HOMOLOG"/>
    <property type="match status" value="1"/>
</dbReference>
<dbReference type="PANTHER" id="PTHR18359">
    <property type="entry name" value="WD-REPEAT PROTEIN-RELATED"/>
    <property type="match status" value="1"/>
</dbReference>
<dbReference type="Pfam" id="PF00400">
    <property type="entry name" value="WD40"/>
    <property type="match status" value="1"/>
</dbReference>
<dbReference type="SMART" id="SM00320">
    <property type="entry name" value="WD40"/>
    <property type="match status" value="5"/>
</dbReference>
<dbReference type="SUPFAM" id="SSF50978">
    <property type="entry name" value="WD40 repeat-like"/>
    <property type="match status" value="1"/>
</dbReference>
<dbReference type="PROSITE" id="PS50082">
    <property type="entry name" value="WD_REPEATS_2"/>
    <property type="match status" value="1"/>
</dbReference>
<dbReference type="PROSITE" id="PS50294">
    <property type="entry name" value="WD_REPEATS_REGION"/>
    <property type="match status" value="1"/>
</dbReference>
<reference key="1">
    <citation type="journal article" date="2002" name="Nature">
        <title>The genome sequence of Schizosaccharomyces pombe.</title>
        <authorList>
            <person name="Wood V."/>
            <person name="Gwilliam R."/>
            <person name="Rajandream M.A."/>
            <person name="Lyne M.H."/>
            <person name="Lyne R."/>
            <person name="Stewart A."/>
            <person name="Sgouros J.G."/>
            <person name="Peat N."/>
            <person name="Hayles J."/>
            <person name="Baker S.G."/>
            <person name="Basham D."/>
            <person name="Bowman S."/>
            <person name="Brooks K."/>
            <person name="Brown D."/>
            <person name="Brown S."/>
            <person name="Chillingworth T."/>
            <person name="Churcher C.M."/>
            <person name="Collins M."/>
            <person name="Connor R."/>
            <person name="Cronin A."/>
            <person name="Davis P."/>
            <person name="Feltwell T."/>
            <person name="Fraser A."/>
            <person name="Gentles S."/>
            <person name="Goble A."/>
            <person name="Hamlin N."/>
            <person name="Harris D.E."/>
            <person name="Hidalgo J."/>
            <person name="Hodgson G."/>
            <person name="Holroyd S."/>
            <person name="Hornsby T."/>
            <person name="Howarth S."/>
            <person name="Huckle E.J."/>
            <person name="Hunt S."/>
            <person name="Jagels K."/>
            <person name="James K.D."/>
            <person name="Jones L."/>
            <person name="Jones M."/>
            <person name="Leather S."/>
            <person name="McDonald S."/>
            <person name="McLean J."/>
            <person name="Mooney P."/>
            <person name="Moule S."/>
            <person name="Mungall K.L."/>
            <person name="Murphy L.D."/>
            <person name="Niblett D."/>
            <person name="Odell C."/>
            <person name="Oliver K."/>
            <person name="O'Neil S."/>
            <person name="Pearson D."/>
            <person name="Quail M.A."/>
            <person name="Rabbinowitsch E."/>
            <person name="Rutherford K.M."/>
            <person name="Rutter S."/>
            <person name="Saunders D."/>
            <person name="Seeger K."/>
            <person name="Sharp S."/>
            <person name="Skelton J."/>
            <person name="Simmonds M.N."/>
            <person name="Squares R."/>
            <person name="Squares S."/>
            <person name="Stevens K."/>
            <person name="Taylor K."/>
            <person name="Taylor R.G."/>
            <person name="Tivey A."/>
            <person name="Walsh S.V."/>
            <person name="Warren T."/>
            <person name="Whitehead S."/>
            <person name="Woodward J.R."/>
            <person name="Volckaert G."/>
            <person name="Aert R."/>
            <person name="Robben J."/>
            <person name="Grymonprez B."/>
            <person name="Weltjens I."/>
            <person name="Vanstreels E."/>
            <person name="Rieger M."/>
            <person name="Schaefer M."/>
            <person name="Mueller-Auer S."/>
            <person name="Gabel C."/>
            <person name="Fuchs M."/>
            <person name="Duesterhoeft A."/>
            <person name="Fritzc C."/>
            <person name="Holzer E."/>
            <person name="Moestl D."/>
            <person name="Hilbert H."/>
            <person name="Borzym K."/>
            <person name="Langer I."/>
            <person name="Beck A."/>
            <person name="Lehrach H."/>
            <person name="Reinhardt R."/>
            <person name="Pohl T.M."/>
            <person name="Eger P."/>
            <person name="Zimmermann W."/>
            <person name="Wedler H."/>
            <person name="Wambutt R."/>
            <person name="Purnelle B."/>
            <person name="Goffeau A."/>
            <person name="Cadieu E."/>
            <person name="Dreano S."/>
            <person name="Gloux S."/>
            <person name="Lelaure V."/>
            <person name="Mottier S."/>
            <person name="Galibert F."/>
            <person name="Aves S.J."/>
            <person name="Xiang Z."/>
            <person name="Hunt C."/>
            <person name="Moore K."/>
            <person name="Hurst S.M."/>
            <person name="Lucas M."/>
            <person name="Rochet M."/>
            <person name="Gaillardin C."/>
            <person name="Tallada V.A."/>
            <person name="Garzon A."/>
            <person name="Thode G."/>
            <person name="Daga R.R."/>
            <person name="Cruzado L."/>
            <person name="Jimenez J."/>
            <person name="Sanchez M."/>
            <person name="del Rey F."/>
            <person name="Benito J."/>
            <person name="Dominguez A."/>
            <person name="Revuelta J.L."/>
            <person name="Moreno S."/>
            <person name="Armstrong J."/>
            <person name="Forsburg S.L."/>
            <person name="Cerutti L."/>
            <person name="Lowe T."/>
            <person name="McCombie W.R."/>
            <person name="Paulsen I."/>
            <person name="Potashkin J."/>
            <person name="Shpakovski G.V."/>
            <person name="Ussery D."/>
            <person name="Barrell B.G."/>
            <person name="Nurse P."/>
        </authorList>
    </citation>
    <scope>NUCLEOTIDE SEQUENCE [LARGE SCALE GENOMIC DNA]</scope>
    <source>
        <strain>972 / ATCC 24843</strain>
    </source>
</reference>
<reference key="2">
    <citation type="journal article" date="1997" name="DNA Res.">
        <title>Identification of open reading frames in Schizosaccharomyces pombe cDNAs.</title>
        <authorList>
            <person name="Yoshioka S."/>
            <person name="Kato K."/>
            <person name="Nakai K."/>
            <person name="Okayama H."/>
            <person name="Nojima H."/>
        </authorList>
    </citation>
    <scope>NUCLEOTIDE SEQUENCE [LARGE SCALE MRNA] OF 269-519</scope>
    <source>
        <strain>PR745</strain>
    </source>
</reference>
<reference key="3">
    <citation type="journal article" date="2006" name="Nat. Biotechnol.">
        <title>ORFeome cloning and global analysis of protein localization in the fission yeast Schizosaccharomyces pombe.</title>
        <authorList>
            <person name="Matsuyama A."/>
            <person name="Arai R."/>
            <person name="Yashiroda Y."/>
            <person name="Shirai A."/>
            <person name="Kamata A."/>
            <person name="Sekido S."/>
            <person name="Kobayashi Y."/>
            <person name="Hashimoto A."/>
            <person name="Hamamoto M."/>
            <person name="Hiraoka Y."/>
            <person name="Horinouchi S."/>
            <person name="Yoshida M."/>
        </authorList>
    </citation>
    <scope>IDENTIFICATION OF FRAMESHIFT</scope>
    <source>
        <strain>972 / ATCC 24843</strain>
        <strain>JY3</strain>
    </source>
</reference>